<accession>P96155</accession>
<reference key="1">
    <citation type="journal article" date="1996" name="J. Biol. Chem.">
        <title>The chitin catabolic cascade in the marine bacterium Vibrio furnissii. Molecular cloning, isolation, and characterization of a periplasmic beta-N-acetylglucosaminidase.</title>
        <authorList>
            <person name="Keyhani N.O."/>
            <person name="Roseman S."/>
        </authorList>
    </citation>
    <scope>NUCLEOTIDE SEQUENCE [GENOMIC DNA]</scope>
    <scope>PROTEIN SEQUENCE OF 1-20</scope>
    <scope>FUNCTION</scope>
    <scope>CATALYTIC ACTIVITY</scope>
    <scope>ACTIVITY REGULATION</scope>
    <scope>BIOPHYSICOCHEMICAL PROPERTIES</scope>
    <scope>PATHWAY</scope>
    <scope>SUBUNIT</scope>
    <scope>SUBCELLULAR LOCATION</scope>
    <scope>INDUCTION</scope>
</reference>
<gene>
    <name evidence="2" type="primary">exoI</name>
</gene>
<dbReference type="EC" id="3.2.1.52" evidence="1"/>
<dbReference type="EMBL" id="U41417">
    <property type="protein sequence ID" value="AAC44672.1"/>
    <property type="molecule type" value="Genomic_DNA"/>
</dbReference>
<dbReference type="SMR" id="P96155"/>
<dbReference type="CAZy" id="GH20">
    <property type="family name" value="Glycoside Hydrolase Family 20"/>
</dbReference>
<dbReference type="BioCyc" id="MetaCyc:MONOMERMETA-16856"/>
<dbReference type="BRENDA" id="3.2.1.52">
    <property type="organism ID" value="6631"/>
</dbReference>
<dbReference type="UniPathway" id="UPA00349"/>
<dbReference type="GO" id="GO:0016020">
    <property type="term" value="C:membrane"/>
    <property type="evidence" value="ECO:0007669"/>
    <property type="project" value="TreeGrafter"/>
</dbReference>
<dbReference type="GO" id="GO:0042597">
    <property type="term" value="C:periplasmic space"/>
    <property type="evidence" value="ECO:0007669"/>
    <property type="project" value="UniProtKB-SubCell"/>
</dbReference>
<dbReference type="GO" id="GO:0004563">
    <property type="term" value="F:beta-N-acetylhexosaminidase activity"/>
    <property type="evidence" value="ECO:0007669"/>
    <property type="project" value="UniProtKB-EC"/>
</dbReference>
<dbReference type="GO" id="GO:0006032">
    <property type="term" value="P:chitin catabolic process"/>
    <property type="evidence" value="ECO:0007669"/>
    <property type="project" value="UniProtKB-UniPathway"/>
</dbReference>
<dbReference type="GO" id="GO:0030203">
    <property type="term" value="P:glycosaminoglycan metabolic process"/>
    <property type="evidence" value="ECO:0007669"/>
    <property type="project" value="TreeGrafter"/>
</dbReference>
<dbReference type="GO" id="GO:0000272">
    <property type="term" value="P:polysaccharide catabolic process"/>
    <property type="evidence" value="ECO:0007669"/>
    <property type="project" value="UniProtKB-KW"/>
</dbReference>
<dbReference type="CDD" id="cd06563">
    <property type="entry name" value="GH20_chitobiase-like"/>
    <property type="match status" value="1"/>
</dbReference>
<dbReference type="Gene3D" id="3.30.379.10">
    <property type="entry name" value="Chitobiase/beta-hexosaminidase domain 2-like"/>
    <property type="match status" value="1"/>
</dbReference>
<dbReference type="Gene3D" id="3.20.20.80">
    <property type="entry name" value="Glycosidases"/>
    <property type="match status" value="1"/>
</dbReference>
<dbReference type="InterPro" id="IPR025705">
    <property type="entry name" value="Beta_hexosaminidase_sua/sub"/>
</dbReference>
<dbReference type="InterPro" id="IPR015883">
    <property type="entry name" value="Glyco_hydro_20_cat"/>
</dbReference>
<dbReference type="InterPro" id="IPR017853">
    <property type="entry name" value="Glycoside_hydrolase_SF"/>
</dbReference>
<dbReference type="InterPro" id="IPR029018">
    <property type="entry name" value="Hex-like_dom2"/>
</dbReference>
<dbReference type="InterPro" id="IPR015882">
    <property type="entry name" value="HEX_bac_N"/>
</dbReference>
<dbReference type="PANTHER" id="PTHR22600">
    <property type="entry name" value="BETA-HEXOSAMINIDASE"/>
    <property type="match status" value="1"/>
</dbReference>
<dbReference type="PANTHER" id="PTHR22600:SF57">
    <property type="entry name" value="BETA-N-ACETYLHEXOSAMINIDASE"/>
    <property type="match status" value="1"/>
</dbReference>
<dbReference type="Pfam" id="PF00728">
    <property type="entry name" value="Glyco_hydro_20"/>
    <property type="match status" value="1"/>
</dbReference>
<dbReference type="Pfam" id="PF02838">
    <property type="entry name" value="Glyco_hydro_20b"/>
    <property type="match status" value="1"/>
</dbReference>
<dbReference type="PRINTS" id="PR00738">
    <property type="entry name" value="GLHYDRLASE20"/>
</dbReference>
<dbReference type="SUPFAM" id="SSF51445">
    <property type="entry name" value="(Trans)glycosidases"/>
    <property type="match status" value="1"/>
</dbReference>
<dbReference type="SUPFAM" id="SSF55545">
    <property type="entry name" value="beta-N-acetylhexosaminidase-like domain"/>
    <property type="match status" value="1"/>
</dbReference>
<keyword id="KW-0119">Carbohydrate metabolism</keyword>
<keyword id="KW-0146">Chitin degradation</keyword>
<keyword id="KW-0903">Direct protein sequencing</keyword>
<keyword id="KW-0326">Glycosidase</keyword>
<keyword id="KW-0378">Hydrolase</keyword>
<keyword id="KW-0574">Periplasm</keyword>
<keyword id="KW-0624">Polysaccharide degradation</keyword>
<name>HEX1_VIBFU</name>
<feature type="chain" id="PRO_0000215377" description="Beta-hexosaminidase">
    <location>
        <begin position="1"/>
        <end position="611"/>
    </location>
</feature>
<protein>
    <recommendedName>
        <fullName evidence="3">Beta-hexosaminidase</fullName>
        <ecNumber evidence="1">3.2.1.52</ecNumber>
    </recommendedName>
    <alternativeName>
        <fullName evidence="3">Beta-N-acetylhexosaminidase</fullName>
    </alternativeName>
    <alternativeName>
        <fullName evidence="3">N-acetyl-beta-glucosaminidase</fullName>
    </alternativeName>
</protein>
<proteinExistence type="evidence at protein level"/>
<sequence length="611" mass="69502">MNYRIDFAVLSEHPQFCRFGLTLHNLSDQDLKAWSLHFTIDRYIQPDSISHSQIHQVGSFCSLTPEQDVINSNSHFYCEFSIKTAPFPFHYYTDGIKAAFVQINDVEPRVRHDVIVTPIALASPYRERSEIPATDAATLSLLPKPNHIERLDGEFALTAGSQISLQSSCAETAATWLKQELTHLYQWQPHDIGSADIVLRTNPTLDEGAYLLSVDRKPIRLEASSHIGFVHASATLLQLVRPDGDNLLVPHIVIKDAPRFKYRGMMLDCARHFHPLERVKRLINQLAHYKFNTFHWHLTDDEGWRIEIKSLPQLTDIGAWRGVDEVLEPQYSLLTEKHGGFYTQEEIREVIAYAAERGITVIPEIDIPGHSRAAIKALPEWLFDEDDQSQYRSIQYYNDNVLSPALPGTYRFLDCVLEEVAALFPSHFIHIGADEVPDGVWVNSPKCQALMAEEGYTDAKELQGHLLRYAEKKLKSLGKRMVGWEEAQHGDKVSKDTVIYSWLSEQAALNCARQGFDVILQPGQFTYLDIAQDYAPEEPGVDWAGVTPLERAYRYEPLVEVPEHDPLRKRILGIQCALWCELVNNQDRMDYMIYPRLTALAGSGLDTKIPA</sequence>
<evidence type="ECO:0000269" key="1">
    <source>
    </source>
</evidence>
<evidence type="ECO:0000303" key="2">
    <source>
    </source>
</evidence>
<evidence type="ECO:0000305" key="3"/>
<evidence type="ECO:0000305" key="4">
    <source>
    </source>
</evidence>
<comment type="function">
    <text evidence="1">Hydrolyzes aryl-N-acetyl-beta-D-glucosaminide (aryl-beta-GlcNAc), aryl-beta-GalNAc and chitin oligosaccharides. Can hydrolyze rapidly the artificial substrates p-nitrophenyl-N-acetyl-beta-D-glucosaminide (PNP-beta-GlcNAc) and 4-methylumbelliferyl-beta-GlcNAc, and is slightly active on p-nitrophenyl-beta-GalNAc. This enzyme is not processive, i.e. when it hydrolyzes (GlcNAc)n, both products, (Glc-NAc)n-1 and the terminal GlcNAc, are released before the enzyme attacks a second molecule of (GlcNAc)n or (GlcNAc)n-1.</text>
</comment>
<comment type="catalytic activity">
    <reaction evidence="1">
        <text>Hydrolysis of terminal non-reducing N-acetyl-D-hexosamine residues in N-acetyl-beta-D-hexosaminides.</text>
        <dbReference type="EC" id="3.2.1.52"/>
    </reaction>
</comment>
<comment type="activity regulation">
    <text evidence="1">Inhibited by mercuric ions, PNP-beta-Glc, PNP-beta-Gal, PNP-alpha-GlcNAc, and PNP-beta-S-GlcNAc.</text>
</comment>
<comment type="biophysicochemical properties">
    <kinetics>
        <KM evidence="1">1.7 mM for (GlcNAc)2</KM>
        <KM evidence="1">0.83 mM for (GlcNAc)3</KM>
        <KM evidence="1">0.78 mM for (GlcNAc)4</KM>
        <KM evidence="1">3.7 mM for (GlcNAc)5</KM>
        <KM evidence="1">3.5 mM for (GlcNAc)6</KM>
        <KM evidence="1">0.09 mM for PNP-GlcNAc</KM>
        <KM evidence="1">0.33 mM for PNP-GalNAc</KM>
        <Vmax evidence="1">53.6 umol/min/mg enzyme with (GlcNAc)2 as substrate</Vmax>
        <Vmax evidence="1">335.0 umol/min/mg enzyme with (GlcNAc)3 as substrate</Vmax>
        <Vmax evidence="1">376.0 umol/min/mg enzyme with (GlcNAc)4 as substrate</Vmax>
        <Vmax evidence="1">365.0 umol/min/mg enzyme with (GlcNAc)5 as substrate</Vmax>
        <Vmax evidence="1">376.0 umol/min/mg enzyme with (GlcNAc)6 as substrate</Vmax>
        <Vmax evidence="1">270.0 umol/min/mg enzyme with PNP-GlcNAc as substrate</Vmax>
        <Vmax evidence="1">130.0 umol/min/mg enzyme with PNP-GalNAc as substrate</Vmax>
    </kinetics>
    <phDependence>
        <text evidence="1">Optimum pH is 7.0 with (Glc-NAc)n (n=3-6) as substrate and 5.8 with (GlcNAc)2 as substrate.</text>
    </phDependence>
    <temperatureDependence>
        <text evidence="1">Optimum temperature is 35-40 degrees Celsius.</text>
    </temperatureDependence>
</comment>
<comment type="pathway">
    <text evidence="1">Glycan degradation; chitin degradation.</text>
</comment>
<comment type="subunit">
    <text evidence="4">Homodimer.</text>
</comment>
<comment type="subcellular location">
    <subcellularLocation>
        <location evidence="1">Periplasm</location>
    </subcellularLocation>
</comment>
<comment type="induction">
    <text evidence="1">By (GlcNAc)2.</text>
</comment>
<comment type="similarity">
    <text evidence="3">Belongs to the glycosyl hydrolase 20 family.</text>
</comment>
<organism>
    <name type="scientific">Vibrio furnissii</name>
    <dbReference type="NCBI Taxonomy" id="29494"/>
    <lineage>
        <taxon>Bacteria</taxon>
        <taxon>Pseudomonadati</taxon>
        <taxon>Pseudomonadota</taxon>
        <taxon>Gammaproteobacteria</taxon>
        <taxon>Vibrionales</taxon>
        <taxon>Vibrionaceae</taxon>
        <taxon>Vibrio</taxon>
    </lineage>
</organism>